<sequence length="210" mass="22692">MTKGILGRKIGMTQVFAENGELIPVTVIAANPNVVLQKKTTETDGYNAIQLGFEDKREKLTNKPEQGHTAKASTTPKRFIREIRDADVDGLEVGQEVKVDVFATGEIVDVTGISKGKGFQGVIKRHGQSRGPMSHGSRYHRRPGSMGPVAPNRVFKGKKLAGRMGGDQVTIQNLEIVQVDTERNLLLVKGNVPGAKKSLVVVQGAVKVSK</sequence>
<gene>
    <name evidence="1" type="primary">rplC</name>
    <name type="ordered locus">BAMEG_0126</name>
</gene>
<reference key="1">
    <citation type="submission" date="2008-10" db="EMBL/GenBank/DDBJ databases">
        <title>Genome sequence of Bacillus anthracis str. CDC 684.</title>
        <authorList>
            <person name="Dodson R.J."/>
            <person name="Munk A.C."/>
            <person name="Brettin T."/>
            <person name="Bruce D."/>
            <person name="Detter C."/>
            <person name="Tapia R."/>
            <person name="Han C."/>
            <person name="Sutton G."/>
            <person name="Sims D."/>
        </authorList>
    </citation>
    <scope>NUCLEOTIDE SEQUENCE [LARGE SCALE GENOMIC DNA]</scope>
    <source>
        <strain>CDC 684 / NRRL 3495</strain>
    </source>
</reference>
<comment type="function">
    <text evidence="1">One of the primary rRNA binding proteins, it binds directly near the 3'-end of the 23S rRNA, where it nucleates assembly of the 50S subunit.</text>
</comment>
<comment type="subunit">
    <text evidence="1">Part of the 50S ribosomal subunit. Forms a cluster with proteins L14 and L19.</text>
</comment>
<comment type="similarity">
    <text evidence="1">Belongs to the universal ribosomal protein uL3 family.</text>
</comment>
<accession>C3LJ82</accession>
<name>RL3_BACAC</name>
<organism>
    <name type="scientific">Bacillus anthracis (strain CDC 684 / NRRL 3495)</name>
    <dbReference type="NCBI Taxonomy" id="568206"/>
    <lineage>
        <taxon>Bacteria</taxon>
        <taxon>Bacillati</taxon>
        <taxon>Bacillota</taxon>
        <taxon>Bacilli</taxon>
        <taxon>Bacillales</taxon>
        <taxon>Bacillaceae</taxon>
        <taxon>Bacillus</taxon>
        <taxon>Bacillus cereus group</taxon>
    </lineage>
</organism>
<evidence type="ECO:0000255" key="1">
    <source>
        <dbReference type="HAMAP-Rule" id="MF_01325"/>
    </source>
</evidence>
<evidence type="ECO:0000256" key="2">
    <source>
        <dbReference type="SAM" id="MobiDB-lite"/>
    </source>
</evidence>
<evidence type="ECO:0000305" key="3"/>
<protein>
    <recommendedName>
        <fullName evidence="1">Large ribosomal subunit protein uL3</fullName>
    </recommendedName>
    <alternativeName>
        <fullName evidence="3">50S ribosomal protein L3</fullName>
    </alternativeName>
</protein>
<proteinExistence type="inferred from homology"/>
<dbReference type="EMBL" id="CP001215">
    <property type="protein sequence ID" value="ACP17314.1"/>
    <property type="molecule type" value="Genomic_DNA"/>
</dbReference>
<dbReference type="RefSeq" id="WP_000160207.1">
    <property type="nucleotide sequence ID" value="NC_012581.1"/>
</dbReference>
<dbReference type="SMR" id="C3LJ82"/>
<dbReference type="GeneID" id="93010943"/>
<dbReference type="KEGG" id="bah:BAMEG_0126"/>
<dbReference type="HOGENOM" id="CLU_044142_4_1_9"/>
<dbReference type="GO" id="GO:0022625">
    <property type="term" value="C:cytosolic large ribosomal subunit"/>
    <property type="evidence" value="ECO:0007669"/>
    <property type="project" value="TreeGrafter"/>
</dbReference>
<dbReference type="GO" id="GO:0019843">
    <property type="term" value="F:rRNA binding"/>
    <property type="evidence" value="ECO:0007669"/>
    <property type="project" value="UniProtKB-UniRule"/>
</dbReference>
<dbReference type="GO" id="GO:0003735">
    <property type="term" value="F:structural constituent of ribosome"/>
    <property type="evidence" value="ECO:0007669"/>
    <property type="project" value="InterPro"/>
</dbReference>
<dbReference type="GO" id="GO:0006412">
    <property type="term" value="P:translation"/>
    <property type="evidence" value="ECO:0007669"/>
    <property type="project" value="UniProtKB-UniRule"/>
</dbReference>
<dbReference type="FunFam" id="2.40.30.10:FF:000004">
    <property type="entry name" value="50S ribosomal protein L3"/>
    <property type="match status" value="1"/>
</dbReference>
<dbReference type="FunFam" id="3.30.160.810:FF:000002">
    <property type="entry name" value="50S ribosomal protein L3"/>
    <property type="match status" value="1"/>
</dbReference>
<dbReference type="Gene3D" id="3.30.160.810">
    <property type="match status" value="1"/>
</dbReference>
<dbReference type="Gene3D" id="2.40.30.10">
    <property type="entry name" value="Translation factors"/>
    <property type="match status" value="1"/>
</dbReference>
<dbReference type="HAMAP" id="MF_01325_B">
    <property type="entry name" value="Ribosomal_uL3_B"/>
    <property type="match status" value="1"/>
</dbReference>
<dbReference type="InterPro" id="IPR000597">
    <property type="entry name" value="Ribosomal_uL3"/>
</dbReference>
<dbReference type="InterPro" id="IPR019927">
    <property type="entry name" value="Ribosomal_uL3_bac/org-type"/>
</dbReference>
<dbReference type="InterPro" id="IPR019926">
    <property type="entry name" value="Ribosomal_uL3_CS"/>
</dbReference>
<dbReference type="InterPro" id="IPR009000">
    <property type="entry name" value="Transl_B-barrel_sf"/>
</dbReference>
<dbReference type="NCBIfam" id="TIGR03625">
    <property type="entry name" value="L3_bact"/>
    <property type="match status" value="1"/>
</dbReference>
<dbReference type="PANTHER" id="PTHR11229">
    <property type="entry name" value="50S RIBOSOMAL PROTEIN L3"/>
    <property type="match status" value="1"/>
</dbReference>
<dbReference type="PANTHER" id="PTHR11229:SF16">
    <property type="entry name" value="LARGE RIBOSOMAL SUBUNIT PROTEIN UL3C"/>
    <property type="match status" value="1"/>
</dbReference>
<dbReference type="Pfam" id="PF00297">
    <property type="entry name" value="Ribosomal_L3"/>
    <property type="match status" value="1"/>
</dbReference>
<dbReference type="SUPFAM" id="SSF50447">
    <property type="entry name" value="Translation proteins"/>
    <property type="match status" value="1"/>
</dbReference>
<dbReference type="PROSITE" id="PS00474">
    <property type="entry name" value="RIBOSOMAL_L3"/>
    <property type="match status" value="1"/>
</dbReference>
<feature type="chain" id="PRO_1000165865" description="Large ribosomal subunit protein uL3">
    <location>
        <begin position="1"/>
        <end position="210"/>
    </location>
</feature>
<feature type="region of interest" description="Disordered" evidence="2">
    <location>
        <begin position="125"/>
        <end position="151"/>
    </location>
</feature>
<keyword id="KW-0687">Ribonucleoprotein</keyword>
<keyword id="KW-0689">Ribosomal protein</keyword>
<keyword id="KW-0694">RNA-binding</keyword>
<keyword id="KW-0699">rRNA-binding</keyword>